<comment type="function">
    <text evidence="1">Protein S19 forms a complex with S13 that binds strongly to the 16S ribosomal RNA.</text>
</comment>
<comment type="subcellular location">
    <subcellularLocation>
        <location>Plastid</location>
        <location>Chloroplast</location>
    </subcellularLocation>
</comment>
<comment type="similarity">
    <text evidence="1">Belongs to the universal ribosomal protein uS19 family.</text>
</comment>
<gene>
    <name evidence="1" type="primary">rps19</name>
</gene>
<sequence>MTRSLKKNPFVAKHLLRKIEKLNTKAEKEIIITWSRASTIIPTMIGHTIAIHNGREHLPVYIIDLMVGHKLGEFSPTINFRGHAKNDNRSRR</sequence>
<dbReference type="EMBL" id="AP009369">
    <property type="protein sequence ID" value="BAF50063.1"/>
    <property type="molecule type" value="Genomic_DNA"/>
</dbReference>
<dbReference type="RefSeq" id="YP_001123239.1">
    <property type="nucleotide sequence ID" value="NC_009268.1"/>
</dbReference>
<dbReference type="SMR" id="A4QK58"/>
<dbReference type="GeneID" id="4962571"/>
<dbReference type="GO" id="GO:0009507">
    <property type="term" value="C:chloroplast"/>
    <property type="evidence" value="ECO:0007669"/>
    <property type="project" value="UniProtKB-SubCell"/>
</dbReference>
<dbReference type="GO" id="GO:0005763">
    <property type="term" value="C:mitochondrial small ribosomal subunit"/>
    <property type="evidence" value="ECO:0007669"/>
    <property type="project" value="TreeGrafter"/>
</dbReference>
<dbReference type="GO" id="GO:0019843">
    <property type="term" value="F:rRNA binding"/>
    <property type="evidence" value="ECO:0007669"/>
    <property type="project" value="UniProtKB-UniRule"/>
</dbReference>
<dbReference type="GO" id="GO:0003735">
    <property type="term" value="F:structural constituent of ribosome"/>
    <property type="evidence" value="ECO:0007669"/>
    <property type="project" value="InterPro"/>
</dbReference>
<dbReference type="GO" id="GO:0000028">
    <property type="term" value="P:ribosomal small subunit assembly"/>
    <property type="evidence" value="ECO:0007669"/>
    <property type="project" value="TreeGrafter"/>
</dbReference>
<dbReference type="GO" id="GO:0006412">
    <property type="term" value="P:translation"/>
    <property type="evidence" value="ECO:0007669"/>
    <property type="project" value="UniProtKB-UniRule"/>
</dbReference>
<dbReference type="FunFam" id="3.30.860.10:FF:000001">
    <property type="entry name" value="30S ribosomal protein S19"/>
    <property type="match status" value="1"/>
</dbReference>
<dbReference type="Gene3D" id="3.30.860.10">
    <property type="entry name" value="30s Ribosomal Protein S19, Chain A"/>
    <property type="match status" value="1"/>
</dbReference>
<dbReference type="HAMAP" id="MF_00531">
    <property type="entry name" value="Ribosomal_uS19"/>
    <property type="match status" value="1"/>
</dbReference>
<dbReference type="InterPro" id="IPR002222">
    <property type="entry name" value="Ribosomal_uS19"/>
</dbReference>
<dbReference type="InterPro" id="IPR005732">
    <property type="entry name" value="Ribosomal_uS19_bac-type"/>
</dbReference>
<dbReference type="InterPro" id="IPR020934">
    <property type="entry name" value="Ribosomal_uS19_CS"/>
</dbReference>
<dbReference type="InterPro" id="IPR023575">
    <property type="entry name" value="Ribosomal_uS19_SF"/>
</dbReference>
<dbReference type="NCBIfam" id="TIGR01050">
    <property type="entry name" value="rpsS_bact"/>
    <property type="match status" value="1"/>
</dbReference>
<dbReference type="PANTHER" id="PTHR11880">
    <property type="entry name" value="RIBOSOMAL PROTEIN S19P FAMILY MEMBER"/>
    <property type="match status" value="1"/>
</dbReference>
<dbReference type="PANTHER" id="PTHR11880:SF8">
    <property type="entry name" value="SMALL RIBOSOMAL SUBUNIT PROTEIN US19M"/>
    <property type="match status" value="1"/>
</dbReference>
<dbReference type="Pfam" id="PF00203">
    <property type="entry name" value="Ribosomal_S19"/>
    <property type="match status" value="1"/>
</dbReference>
<dbReference type="PIRSF" id="PIRSF002144">
    <property type="entry name" value="Ribosomal_S19"/>
    <property type="match status" value="1"/>
</dbReference>
<dbReference type="PRINTS" id="PR00975">
    <property type="entry name" value="RIBOSOMALS19"/>
</dbReference>
<dbReference type="SUPFAM" id="SSF54570">
    <property type="entry name" value="Ribosomal protein S19"/>
    <property type="match status" value="1"/>
</dbReference>
<dbReference type="PROSITE" id="PS00323">
    <property type="entry name" value="RIBOSOMAL_S19"/>
    <property type="match status" value="1"/>
</dbReference>
<evidence type="ECO:0000255" key="1">
    <source>
        <dbReference type="HAMAP-Rule" id="MF_00531"/>
    </source>
</evidence>
<evidence type="ECO:0000305" key="2"/>
<feature type="chain" id="PRO_0000354334" description="Small ribosomal subunit protein uS19c">
    <location>
        <begin position="1"/>
        <end position="92"/>
    </location>
</feature>
<proteinExistence type="inferred from homology"/>
<accession>A4QK58</accession>
<protein>
    <recommendedName>
        <fullName evidence="1">Small ribosomal subunit protein uS19c</fullName>
    </recommendedName>
    <alternativeName>
        <fullName evidence="2">30S ribosomal protein S19, chloroplastic</fullName>
    </alternativeName>
</protein>
<keyword id="KW-0150">Chloroplast</keyword>
<keyword id="KW-0934">Plastid</keyword>
<keyword id="KW-0687">Ribonucleoprotein</keyword>
<keyword id="KW-0689">Ribosomal protein</keyword>
<keyword id="KW-0694">RNA-binding</keyword>
<keyword id="KW-0699">rRNA-binding</keyword>
<geneLocation type="chloroplast"/>
<organism>
    <name type="scientific">Arabis hirsuta</name>
    <name type="common">Hairy rock-cress</name>
    <name type="synonym">Turritis hirsuta</name>
    <dbReference type="NCBI Taxonomy" id="78191"/>
    <lineage>
        <taxon>Eukaryota</taxon>
        <taxon>Viridiplantae</taxon>
        <taxon>Streptophyta</taxon>
        <taxon>Embryophyta</taxon>
        <taxon>Tracheophyta</taxon>
        <taxon>Spermatophyta</taxon>
        <taxon>Magnoliopsida</taxon>
        <taxon>eudicotyledons</taxon>
        <taxon>Gunneridae</taxon>
        <taxon>Pentapetalae</taxon>
        <taxon>rosids</taxon>
        <taxon>malvids</taxon>
        <taxon>Brassicales</taxon>
        <taxon>Brassicaceae</taxon>
        <taxon>Arabideae</taxon>
        <taxon>Arabis</taxon>
    </lineage>
</organism>
<name>RR19_ARAHI</name>
<reference key="1">
    <citation type="submission" date="2007-03" db="EMBL/GenBank/DDBJ databases">
        <title>Sequencing analysis of Arabis hirsuta chloroplast DNA.</title>
        <authorList>
            <person name="Hosouchi T."/>
            <person name="Tsuruoka H."/>
            <person name="Kotani H."/>
        </authorList>
    </citation>
    <scope>NUCLEOTIDE SEQUENCE [LARGE SCALE GENOMIC DNA]</scope>
</reference>